<sequence length="313" mass="35362">MSVNLKGRSLLTLLDFSPEEIRYLLDISKQVKMENRSKLRTERFKGMTLAMIFEKRSTRTRLAFETAFAEEGGHPIFLSPNDIHLGAKESLEDTARVLGRMVDAIMFRGYKQETVEKLAEYSGVPVYNGLTDEFHPTQALADLMTIEENFGRLKGVKVVFMGDTRNNVATSLMIACAKMGMNFVACGPEELKPRSDVFKRCQEIVKETDGSVSFTSNLEEALAGADVVYTDVWASMGEEDKEKERMALLKPYQVNERVMEMTGKSETIFMHCLPAVKGQEVTYEVIEGKQSRVWDEAENRKHTIKAVMIATLL</sequence>
<reference key="1">
    <citation type="submission" date="1997-01" db="EMBL/GenBank/DDBJ databases">
        <authorList>
            <person name="van de Casteele M."/>
            <person name="Legrain C."/>
            <person name="Glansdorff N."/>
        </authorList>
    </citation>
    <scope>NUCLEOTIDE SEQUENCE [GENOMIC DNA]</scope>
    <source>
        <strain>ATCC 43589 / DSM 3109 / JCM 10099 / NBRC 100826 / MSB8</strain>
    </source>
</reference>
<reference key="2">
    <citation type="journal article" date="1999" name="Nature">
        <title>Evidence for lateral gene transfer between Archaea and Bacteria from genome sequence of Thermotoga maritima.</title>
        <authorList>
            <person name="Nelson K.E."/>
            <person name="Clayton R.A."/>
            <person name="Gill S.R."/>
            <person name="Gwinn M.L."/>
            <person name="Dodson R.J."/>
            <person name="Haft D.H."/>
            <person name="Hickey E.K."/>
            <person name="Peterson J.D."/>
            <person name="Nelson W.C."/>
            <person name="Ketchum K.A."/>
            <person name="McDonald L.A."/>
            <person name="Utterback T.R."/>
            <person name="Malek J.A."/>
            <person name="Linher K.D."/>
            <person name="Garrett M.M."/>
            <person name="Stewart A.M."/>
            <person name="Cotton M.D."/>
            <person name="Pratt M.S."/>
            <person name="Phillips C.A."/>
            <person name="Richardson D.L."/>
            <person name="Heidelberg J.F."/>
            <person name="Sutton G.G."/>
            <person name="Fleischmann R.D."/>
            <person name="Eisen J.A."/>
            <person name="White O."/>
            <person name="Salzberg S.L."/>
            <person name="Smith H.O."/>
            <person name="Venter J.C."/>
            <person name="Fraser C.M."/>
        </authorList>
    </citation>
    <scope>NUCLEOTIDE SEQUENCE [LARGE SCALE GENOMIC DNA]</scope>
    <source>
        <strain>ATCC 43589 / DSM 3109 / JCM 10099 / NBRC 100826 / MSB8</strain>
    </source>
</reference>
<reference key="3">
    <citation type="submission" date="2004-08" db="PDB data bank">
        <title>Crystal structure of ornithine carbamoyltransferase (TM1097) from Thermotoga maritima at 2.25 a resolution.</title>
        <authorList>
            <consortium name="Joint center for structural genomics (JCSG)"/>
        </authorList>
    </citation>
    <scope>X-RAY CRYSTALLOGRAPHY (2.25 ANGSTROMS) IN COMPLEX WITH SUBSTRATE ANALOG</scope>
</reference>
<proteinExistence type="evidence at protein level"/>
<accession>P96108</accession>
<organism>
    <name type="scientific">Thermotoga maritima (strain ATCC 43589 / DSM 3109 / JCM 10099 / NBRC 100826 / MSB8)</name>
    <dbReference type="NCBI Taxonomy" id="243274"/>
    <lineage>
        <taxon>Bacteria</taxon>
        <taxon>Thermotogati</taxon>
        <taxon>Thermotogota</taxon>
        <taxon>Thermotogae</taxon>
        <taxon>Thermotogales</taxon>
        <taxon>Thermotogaceae</taxon>
        <taxon>Thermotoga</taxon>
    </lineage>
</organism>
<keyword id="KW-0002">3D-structure</keyword>
<keyword id="KW-0028">Amino-acid biosynthesis</keyword>
<keyword id="KW-0055">Arginine biosynthesis</keyword>
<keyword id="KW-0963">Cytoplasm</keyword>
<keyword id="KW-1185">Reference proteome</keyword>
<keyword id="KW-0808">Transferase</keyword>
<comment type="function">
    <text evidence="1">Reversibly catalyzes the transfer of the carbamoyl group from carbamoyl phosphate (CP) to the N(epsilon) atom of ornithine (ORN) to produce L-citrulline.</text>
</comment>
<comment type="catalytic activity">
    <reaction evidence="1">
        <text>carbamoyl phosphate + L-ornithine = L-citrulline + phosphate + H(+)</text>
        <dbReference type="Rhea" id="RHEA:19513"/>
        <dbReference type="ChEBI" id="CHEBI:15378"/>
        <dbReference type="ChEBI" id="CHEBI:43474"/>
        <dbReference type="ChEBI" id="CHEBI:46911"/>
        <dbReference type="ChEBI" id="CHEBI:57743"/>
        <dbReference type="ChEBI" id="CHEBI:58228"/>
        <dbReference type="EC" id="2.1.3.3"/>
    </reaction>
</comment>
<comment type="pathway">
    <text evidence="1">Amino-acid biosynthesis; L-arginine biosynthesis; L-arginine from L-ornithine and carbamoyl phosphate: step 1/3.</text>
</comment>
<comment type="subcellular location">
    <subcellularLocation>
        <location evidence="1">Cytoplasm</location>
    </subcellularLocation>
</comment>
<comment type="similarity">
    <text evidence="1">Belongs to the aspartate/ornithine carbamoyltransferase superfamily. OTCase family.</text>
</comment>
<gene>
    <name evidence="1" type="primary">argF</name>
    <name type="ordered locus">TM_1097</name>
</gene>
<name>OTC_THEMA</name>
<dbReference type="EC" id="2.1.3.3" evidence="1"/>
<dbReference type="EMBL" id="Y10661">
    <property type="protein sequence ID" value="CAA71670.1"/>
    <property type="molecule type" value="Genomic_DNA"/>
</dbReference>
<dbReference type="EMBL" id="AE000512">
    <property type="protein sequence ID" value="AAD36173.1"/>
    <property type="molecule type" value="Genomic_DNA"/>
</dbReference>
<dbReference type="PIR" id="C72294">
    <property type="entry name" value="C72294"/>
</dbReference>
<dbReference type="RefSeq" id="NP_228903.1">
    <property type="nucleotide sequence ID" value="NC_000853.1"/>
</dbReference>
<dbReference type="RefSeq" id="WP_004080343.1">
    <property type="nucleotide sequence ID" value="NC_000853.1"/>
</dbReference>
<dbReference type="PDB" id="1VLV">
    <property type="method" value="X-ray"/>
    <property type="resolution" value="2.25 A"/>
    <property type="chains" value="A=1-313"/>
</dbReference>
<dbReference type="PDBsum" id="1VLV"/>
<dbReference type="SMR" id="P96108"/>
<dbReference type="FunCoup" id="P96108">
    <property type="interactions" value="338"/>
</dbReference>
<dbReference type="STRING" id="243274.TM_1097"/>
<dbReference type="PaxDb" id="243274-THEMA_08860"/>
<dbReference type="EnsemblBacteria" id="AAD36173">
    <property type="protein sequence ID" value="AAD36173"/>
    <property type="gene ID" value="TM_1097"/>
</dbReference>
<dbReference type="KEGG" id="tma:TM1097"/>
<dbReference type="KEGG" id="tmi:THEMA_08860"/>
<dbReference type="KEGG" id="tmm:Tmari_1103"/>
<dbReference type="KEGG" id="tmw:THMA_1120"/>
<dbReference type="eggNOG" id="COG0078">
    <property type="taxonomic scope" value="Bacteria"/>
</dbReference>
<dbReference type="InParanoid" id="P96108"/>
<dbReference type="OrthoDB" id="9802587at2"/>
<dbReference type="UniPathway" id="UPA00068">
    <property type="reaction ID" value="UER00112"/>
</dbReference>
<dbReference type="EvolutionaryTrace" id="P96108"/>
<dbReference type="Proteomes" id="UP000008183">
    <property type="component" value="Chromosome"/>
</dbReference>
<dbReference type="GO" id="GO:0005737">
    <property type="term" value="C:cytoplasm"/>
    <property type="evidence" value="ECO:0007669"/>
    <property type="project" value="UniProtKB-SubCell"/>
</dbReference>
<dbReference type="GO" id="GO:0016597">
    <property type="term" value="F:amino acid binding"/>
    <property type="evidence" value="ECO:0007669"/>
    <property type="project" value="InterPro"/>
</dbReference>
<dbReference type="GO" id="GO:0004585">
    <property type="term" value="F:ornithine carbamoyltransferase activity"/>
    <property type="evidence" value="ECO:0000318"/>
    <property type="project" value="GO_Central"/>
</dbReference>
<dbReference type="GO" id="GO:0042450">
    <property type="term" value="P:arginine biosynthetic process via ornithine"/>
    <property type="evidence" value="ECO:0000318"/>
    <property type="project" value="GO_Central"/>
</dbReference>
<dbReference type="GO" id="GO:0019240">
    <property type="term" value="P:citrulline biosynthetic process"/>
    <property type="evidence" value="ECO:0000318"/>
    <property type="project" value="GO_Central"/>
</dbReference>
<dbReference type="GO" id="GO:0006526">
    <property type="term" value="P:L-arginine biosynthetic process"/>
    <property type="evidence" value="ECO:0007669"/>
    <property type="project" value="UniProtKB-UniRule"/>
</dbReference>
<dbReference type="FunFam" id="3.40.50.1370:FF:000044">
    <property type="entry name" value="Ornithine carbamoyltransferase"/>
    <property type="match status" value="1"/>
</dbReference>
<dbReference type="Gene3D" id="3.40.50.1370">
    <property type="entry name" value="Aspartate/ornithine carbamoyltransferase"/>
    <property type="match status" value="2"/>
</dbReference>
<dbReference type="HAMAP" id="MF_01109">
    <property type="entry name" value="OTCase"/>
    <property type="match status" value="1"/>
</dbReference>
<dbReference type="InterPro" id="IPR006132">
    <property type="entry name" value="Asp/Orn_carbamoyltranf_P-bd"/>
</dbReference>
<dbReference type="InterPro" id="IPR006130">
    <property type="entry name" value="Asp/Orn_carbamoylTrfase"/>
</dbReference>
<dbReference type="InterPro" id="IPR036901">
    <property type="entry name" value="Asp/Orn_carbamoylTrfase_sf"/>
</dbReference>
<dbReference type="InterPro" id="IPR006131">
    <property type="entry name" value="Asp_carbamoyltransf_Asp/Orn-bd"/>
</dbReference>
<dbReference type="InterPro" id="IPR002292">
    <property type="entry name" value="Orn/put_carbamltrans"/>
</dbReference>
<dbReference type="InterPro" id="IPR024904">
    <property type="entry name" value="OTCase_ArgI"/>
</dbReference>
<dbReference type="NCBIfam" id="TIGR00658">
    <property type="entry name" value="orni_carb_tr"/>
    <property type="match status" value="1"/>
</dbReference>
<dbReference type="NCBIfam" id="NF001986">
    <property type="entry name" value="PRK00779.1"/>
    <property type="match status" value="1"/>
</dbReference>
<dbReference type="PANTHER" id="PTHR45753:SF2">
    <property type="entry name" value="ORNITHINE CARBAMOYLTRANSFERASE"/>
    <property type="match status" value="1"/>
</dbReference>
<dbReference type="PANTHER" id="PTHR45753">
    <property type="entry name" value="ORNITHINE CARBAMOYLTRANSFERASE, MITOCHONDRIAL"/>
    <property type="match status" value="1"/>
</dbReference>
<dbReference type="Pfam" id="PF00185">
    <property type="entry name" value="OTCace"/>
    <property type="match status" value="1"/>
</dbReference>
<dbReference type="Pfam" id="PF02729">
    <property type="entry name" value="OTCace_N"/>
    <property type="match status" value="1"/>
</dbReference>
<dbReference type="PRINTS" id="PR00100">
    <property type="entry name" value="AOTCASE"/>
</dbReference>
<dbReference type="PRINTS" id="PR00102">
    <property type="entry name" value="OTCASE"/>
</dbReference>
<dbReference type="SUPFAM" id="SSF53671">
    <property type="entry name" value="Aspartate/ornithine carbamoyltransferase"/>
    <property type="match status" value="1"/>
</dbReference>
<dbReference type="PROSITE" id="PS00097">
    <property type="entry name" value="CARBAMOYLTRANSFERASE"/>
    <property type="match status" value="1"/>
</dbReference>
<feature type="chain" id="PRO_0000113049" description="Ornithine carbamoyltransferase">
    <location>
        <begin position="1"/>
        <end position="313"/>
    </location>
</feature>
<feature type="binding site" evidence="2">
    <location>
        <begin position="57"/>
        <end position="60"/>
    </location>
    <ligand>
        <name>carbamoyl phosphate</name>
        <dbReference type="ChEBI" id="CHEBI:58228"/>
    </ligand>
</feature>
<feature type="binding site" evidence="2">
    <location>
        <position position="108"/>
    </location>
    <ligand>
        <name>carbamoyl phosphate</name>
        <dbReference type="ChEBI" id="CHEBI:58228"/>
    </ligand>
</feature>
<feature type="binding site" evidence="2">
    <location>
        <begin position="135"/>
        <end position="138"/>
    </location>
    <ligand>
        <name>carbamoyl phosphate</name>
        <dbReference type="ChEBI" id="CHEBI:58228"/>
    </ligand>
</feature>
<feature type="binding site" evidence="1">
    <location>
        <position position="167"/>
    </location>
    <ligand>
        <name>L-ornithine</name>
        <dbReference type="ChEBI" id="CHEBI:46911"/>
    </ligand>
</feature>
<feature type="binding site" evidence="1">
    <location>
        <position position="231"/>
    </location>
    <ligand>
        <name>L-ornithine</name>
        <dbReference type="ChEBI" id="CHEBI:46911"/>
    </ligand>
</feature>
<feature type="binding site" evidence="1">
    <location>
        <begin position="235"/>
        <end position="236"/>
    </location>
    <ligand>
        <name>L-ornithine</name>
        <dbReference type="ChEBI" id="CHEBI:46911"/>
    </ligand>
</feature>
<feature type="binding site" evidence="1">
    <location>
        <begin position="272"/>
        <end position="273"/>
    </location>
    <ligand>
        <name>carbamoyl phosphate</name>
        <dbReference type="ChEBI" id="CHEBI:58228"/>
    </ligand>
</feature>
<feature type="binding site" evidence="2">
    <location>
        <position position="300"/>
    </location>
    <ligand>
        <name>carbamoyl phosphate</name>
        <dbReference type="ChEBI" id="CHEBI:58228"/>
    </ligand>
</feature>
<feature type="helix" evidence="3">
    <location>
        <begin position="13"/>
        <end position="15"/>
    </location>
</feature>
<feature type="helix" evidence="3">
    <location>
        <begin position="18"/>
        <end position="37"/>
    </location>
</feature>
<feature type="turn" evidence="3">
    <location>
        <begin position="43"/>
        <end position="46"/>
    </location>
</feature>
<feature type="strand" evidence="3">
    <location>
        <begin position="48"/>
        <end position="55"/>
    </location>
</feature>
<feature type="helix" evidence="3">
    <location>
        <begin position="58"/>
        <end position="70"/>
    </location>
</feature>
<feature type="strand" evidence="3">
    <location>
        <begin position="74"/>
        <end position="78"/>
    </location>
</feature>
<feature type="turn" evidence="3">
    <location>
        <begin position="80"/>
        <end position="82"/>
    </location>
</feature>
<feature type="turn" evidence="3">
    <location>
        <begin position="85"/>
        <end position="87"/>
    </location>
</feature>
<feature type="helix" evidence="3">
    <location>
        <begin position="91"/>
        <end position="99"/>
    </location>
</feature>
<feature type="strand" evidence="3">
    <location>
        <begin position="103"/>
        <end position="110"/>
    </location>
</feature>
<feature type="helix" evidence="3">
    <location>
        <begin position="112"/>
        <end position="122"/>
    </location>
</feature>
<feature type="strand" evidence="3">
    <location>
        <begin position="126"/>
        <end position="129"/>
    </location>
</feature>
<feature type="helix" evidence="3">
    <location>
        <begin position="136"/>
        <end position="150"/>
    </location>
</feature>
<feature type="strand" evidence="3">
    <location>
        <begin position="157"/>
        <end position="162"/>
    </location>
</feature>
<feature type="helix" evidence="3">
    <location>
        <begin position="167"/>
        <end position="178"/>
    </location>
</feature>
<feature type="strand" evidence="3">
    <location>
        <begin position="182"/>
        <end position="187"/>
    </location>
</feature>
<feature type="helix" evidence="3">
    <location>
        <begin position="189"/>
        <end position="191"/>
    </location>
</feature>
<feature type="helix" evidence="3">
    <location>
        <begin position="195"/>
        <end position="208"/>
    </location>
</feature>
<feature type="strand" evidence="3">
    <location>
        <begin position="211"/>
        <end position="216"/>
    </location>
</feature>
<feature type="helix" evidence="3">
    <location>
        <begin position="218"/>
        <end position="222"/>
    </location>
</feature>
<feature type="strand" evidence="3">
    <location>
        <begin position="226"/>
        <end position="230"/>
    </location>
</feature>
<feature type="helix" evidence="3">
    <location>
        <begin position="246"/>
        <end position="249"/>
    </location>
</feature>
<feature type="helix" evidence="3">
    <location>
        <begin position="250"/>
        <end position="252"/>
    </location>
</feature>
<feature type="helix" evidence="3">
    <location>
        <begin position="256"/>
        <end position="260"/>
    </location>
</feature>
<feature type="strand" evidence="3">
    <location>
        <begin position="268"/>
        <end position="271"/>
    </location>
</feature>
<feature type="turn" evidence="3">
    <location>
        <begin position="278"/>
        <end position="280"/>
    </location>
</feature>
<feature type="helix" evidence="3">
    <location>
        <begin position="283"/>
        <end position="286"/>
    </location>
</feature>
<feature type="helix" evidence="3">
    <location>
        <begin position="293"/>
        <end position="312"/>
    </location>
</feature>
<evidence type="ECO:0000255" key="1">
    <source>
        <dbReference type="HAMAP-Rule" id="MF_01109"/>
    </source>
</evidence>
<evidence type="ECO:0000305" key="2">
    <source ref="3"/>
</evidence>
<evidence type="ECO:0007829" key="3">
    <source>
        <dbReference type="PDB" id="1VLV"/>
    </source>
</evidence>
<protein>
    <recommendedName>
        <fullName evidence="1">Ornithine carbamoyltransferase</fullName>
        <shortName evidence="1">OTCase</shortName>
        <ecNumber evidence="1">2.1.3.3</ecNumber>
    </recommendedName>
</protein>